<dbReference type="PIR" id="B91685">
    <property type="entry name" value="HACMA"/>
</dbReference>
<dbReference type="PDB" id="3GDJ">
    <property type="method" value="X-ray"/>
    <property type="resolution" value="2.00 A"/>
    <property type="chains" value="A/C=1-141"/>
</dbReference>
<dbReference type="PDBsum" id="3GDJ"/>
<dbReference type="SMR" id="P63106"/>
<dbReference type="STRING" id="9838.ENSCDRP00005011730"/>
<dbReference type="EvolutionaryTrace" id="P63106"/>
<dbReference type="GO" id="GO:0072562">
    <property type="term" value="C:blood microparticle"/>
    <property type="evidence" value="ECO:0007669"/>
    <property type="project" value="TreeGrafter"/>
</dbReference>
<dbReference type="GO" id="GO:0031838">
    <property type="term" value="C:haptoglobin-hemoglobin complex"/>
    <property type="evidence" value="ECO:0007669"/>
    <property type="project" value="TreeGrafter"/>
</dbReference>
<dbReference type="GO" id="GO:0005833">
    <property type="term" value="C:hemoglobin complex"/>
    <property type="evidence" value="ECO:0007669"/>
    <property type="project" value="InterPro"/>
</dbReference>
<dbReference type="GO" id="GO:0031720">
    <property type="term" value="F:haptoglobin binding"/>
    <property type="evidence" value="ECO:0007669"/>
    <property type="project" value="TreeGrafter"/>
</dbReference>
<dbReference type="GO" id="GO:0020037">
    <property type="term" value="F:heme binding"/>
    <property type="evidence" value="ECO:0007669"/>
    <property type="project" value="InterPro"/>
</dbReference>
<dbReference type="GO" id="GO:0005506">
    <property type="term" value="F:iron ion binding"/>
    <property type="evidence" value="ECO:0007669"/>
    <property type="project" value="InterPro"/>
</dbReference>
<dbReference type="GO" id="GO:0043177">
    <property type="term" value="F:organic acid binding"/>
    <property type="evidence" value="ECO:0007669"/>
    <property type="project" value="TreeGrafter"/>
</dbReference>
<dbReference type="GO" id="GO:0019825">
    <property type="term" value="F:oxygen binding"/>
    <property type="evidence" value="ECO:0007669"/>
    <property type="project" value="InterPro"/>
</dbReference>
<dbReference type="GO" id="GO:0005344">
    <property type="term" value="F:oxygen carrier activity"/>
    <property type="evidence" value="ECO:0007669"/>
    <property type="project" value="UniProtKB-KW"/>
</dbReference>
<dbReference type="GO" id="GO:0004601">
    <property type="term" value="F:peroxidase activity"/>
    <property type="evidence" value="ECO:0007669"/>
    <property type="project" value="TreeGrafter"/>
</dbReference>
<dbReference type="GO" id="GO:0042744">
    <property type="term" value="P:hydrogen peroxide catabolic process"/>
    <property type="evidence" value="ECO:0007669"/>
    <property type="project" value="TreeGrafter"/>
</dbReference>
<dbReference type="CDD" id="cd08927">
    <property type="entry name" value="Hb-alpha-like"/>
    <property type="match status" value="1"/>
</dbReference>
<dbReference type="FunFam" id="1.10.490.10:FF:000002">
    <property type="entry name" value="Hemoglobin subunit alpha"/>
    <property type="match status" value="1"/>
</dbReference>
<dbReference type="Gene3D" id="1.10.490.10">
    <property type="entry name" value="Globins"/>
    <property type="match status" value="1"/>
</dbReference>
<dbReference type="InterPro" id="IPR000971">
    <property type="entry name" value="Globin"/>
</dbReference>
<dbReference type="InterPro" id="IPR009050">
    <property type="entry name" value="Globin-like_sf"/>
</dbReference>
<dbReference type="InterPro" id="IPR012292">
    <property type="entry name" value="Globin/Proto"/>
</dbReference>
<dbReference type="InterPro" id="IPR002338">
    <property type="entry name" value="Hemoglobin_a-typ"/>
</dbReference>
<dbReference type="InterPro" id="IPR050056">
    <property type="entry name" value="Hemoglobin_oxygen_transport"/>
</dbReference>
<dbReference type="InterPro" id="IPR002339">
    <property type="entry name" value="Hemoglobin_pi"/>
</dbReference>
<dbReference type="PANTHER" id="PTHR11442">
    <property type="entry name" value="HEMOGLOBIN FAMILY MEMBER"/>
    <property type="match status" value="1"/>
</dbReference>
<dbReference type="PANTHER" id="PTHR11442:SF48">
    <property type="entry name" value="HEMOGLOBIN SUBUNIT ALPHA"/>
    <property type="match status" value="1"/>
</dbReference>
<dbReference type="Pfam" id="PF00042">
    <property type="entry name" value="Globin"/>
    <property type="match status" value="1"/>
</dbReference>
<dbReference type="PRINTS" id="PR00612">
    <property type="entry name" value="ALPHAHAEM"/>
</dbReference>
<dbReference type="PRINTS" id="PR00815">
    <property type="entry name" value="PIHAEM"/>
</dbReference>
<dbReference type="SUPFAM" id="SSF46458">
    <property type="entry name" value="Globin-like"/>
    <property type="match status" value="1"/>
</dbReference>
<dbReference type="PROSITE" id="PS01033">
    <property type="entry name" value="GLOBIN"/>
    <property type="match status" value="1"/>
</dbReference>
<gene>
    <name type="primary">HBA</name>
</gene>
<keyword id="KW-0002">3D-structure</keyword>
<keyword id="KW-0007">Acetylation</keyword>
<keyword id="KW-0903">Direct protein sequencing</keyword>
<keyword id="KW-0349">Heme</keyword>
<keyword id="KW-0408">Iron</keyword>
<keyword id="KW-0479">Metal-binding</keyword>
<keyword id="KW-0561">Oxygen transport</keyword>
<keyword id="KW-0597">Phosphoprotein</keyword>
<keyword id="KW-0813">Transport</keyword>
<sequence length="141" mass="15172">VLSSKDKTNVKTAFGKIGGHAAEYGAEALERMFLGFPTTKTYFPHFDLSHGSAQVKAHGKKVGDALTKAADHLDDLPSALSALSDLHAHKLRVDPVNFKLLSHCLLVTVAAHHPGDFTPSVHASLDKFLANVSTVLTSKYR</sequence>
<proteinExistence type="evidence at protein level"/>
<organism>
    <name type="scientific">Camelus dromedarius</name>
    <name type="common">Dromedary</name>
    <name type="synonym">Arabian camel</name>
    <dbReference type="NCBI Taxonomy" id="9838"/>
    <lineage>
        <taxon>Eukaryota</taxon>
        <taxon>Metazoa</taxon>
        <taxon>Chordata</taxon>
        <taxon>Craniata</taxon>
        <taxon>Vertebrata</taxon>
        <taxon>Euteleostomi</taxon>
        <taxon>Mammalia</taxon>
        <taxon>Eutheria</taxon>
        <taxon>Laurasiatheria</taxon>
        <taxon>Artiodactyla</taxon>
        <taxon>Tylopoda</taxon>
        <taxon>Camelidae</taxon>
        <taxon>Camelus</taxon>
    </lineage>
</organism>
<protein>
    <recommendedName>
        <fullName>Hemoglobin subunit alpha</fullName>
    </recommendedName>
    <alternativeName>
        <fullName>Alpha-globin</fullName>
    </alternativeName>
    <alternativeName>
        <fullName>Hemoglobin alpha chain</fullName>
    </alternativeName>
    <component>
        <recommendedName>
            <fullName evidence="2">Hemopressin</fullName>
        </recommendedName>
    </component>
</protein>
<name>HBA_CAMDR</name>
<reference key="1">
    <citation type="journal article" date="1979" name="Hoppe-Seyler's Z. Physiol. Chem.">
        <title>Respiration at high altitudes, phosphate-protein interaction: the sequence of hemoglobins from guinea pig and dromedary.</title>
        <authorList>
            <person name="Braunitzer G."/>
            <person name="Schrank B."/>
            <person name="Stangl A."/>
            <person name="Wiesner H."/>
        </authorList>
    </citation>
    <scope>PROTEIN SEQUENCE</scope>
</reference>
<accession>P63106</accession>
<accession>P01974</accession>
<comment type="function">
    <text>Involved in oxygen transport from the lung to the various peripheral tissues.</text>
</comment>
<comment type="function">
    <molecule>Hemopressin</molecule>
    <text evidence="2">Hemopressin acts as an antagonist peptide of the cannabinoid receptor CNR1. Hemopressin-binding efficiently blocks cannabinoid receptor CNR1 and subsequent signaling.</text>
</comment>
<comment type="subunit">
    <text>Heterotetramer of two alpha chains and two beta chains.</text>
</comment>
<comment type="tissue specificity">
    <text>Red blood cells.</text>
</comment>
<comment type="similarity">
    <text evidence="4">Belongs to the globin family.</text>
</comment>
<feature type="chain" id="PRO_0000052579" description="Hemoglobin subunit alpha">
    <location>
        <begin position="1"/>
        <end position="141"/>
    </location>
</feature>
<feature type="peptide" id="PRO_0000455846" description="Hemopressin" evidence="2">
    <location>
        <begin position="95"/>
        <end position="103"/>
    </location>
</feature>
<feature type="domain" description="Globin" evidence="4">
    <location>
        <begin position="1"/>
        <end position="141"/>
    </location>
</feature>
<feature type="binding site" evidence="4">
    <location>
        <position position="58"/>
    </location>
    <ligand>
        <name>O2</name>
        <dbReference type="ChEBI" id="CHEBI:15379"/>
    </ligand>
</feature>
<feature type="binding site" description="proximal binding residue" evidence="4">
    <location>
        <position position="87"/>
    </location>
    <ligand>
        <name>heme b</name>
        <dbReference type="ChEBI" id="CHEBI:60344"/>
    </ligand>
    <ligandPart>
        <name>Fe</name>
        <dbReference type="ChEBI" id="CHEBI:18248"/>
    </ligandPart>
</feature>
<feature type="modified residue" description="Phosphoserine" evidence="3">
    <location>
        <position position="3"/>
    </location>
</feature>
<feature type="modified residue" description="N6-succinyllysine" evidence="1">
    <location>
        <position position="7"/>
    </location>
</feature>
<feature type="modified residue" description="Phosphothreonine" evidence="3">
    <location>
        <position position="8"/>
    </location>
</feature>
<feature type="modified residue" description="N6-succinyllysine" evidence="1">
    <location>
        <position position="11"/>
    </location>
</feature>
<feature type="modified residue" description="N6-acetyllysine; alternate" evidence="3">
    <location>
        <position position="16"/>
    </location>
</feature>
<feature type="modified residue" description="N6-succinyllysine; alternate" evidence="1">
    <location>
        <position position="16"/>
    </location>
</feature>
<feature type="modified residue" description="Phosphotyrosine" evidence="3">
    <location>
        <position position="24"/>
    </location>
</feature>
<feature type="modified residue" description="N6-succinyllysine" evidence="1">
    <location>
        <position position="40"/>
    </location>
</feature>
<feature type="modified residue" description="Phosphoserine" evidence="3">
    <location>
        <position position="49"/>
    </location>
</feature>
<feature type="modified residue" description="Phosphoserine" evidence="1">
    <location>
        <position position="102"/>
    </location>
</feature>
<feature type="modified residue" description="Phosphothreonine" evidence="1">
    <location>
        <position position="108"/>
    </location>
</feature>
<feature type="modified residue" description="Phosphoserine" evidence="1">
    <location>
        <position position="124"/>
    </location>
</feature>
<feature type="modified residue" description="Phosphothreonine" evidence="1">
    <location>
        <position position="134"/>
    </location>
</feature>
<feature type="modified residue" description="Phosphothreonine" evidence="1">
    <location>
        <position position="137"/>
    </location>
</feature>
<feature type="modified residue" description="Phosphoserine" evidence="1">
    <location>
        <position position="138"/>
    </location>
</feature>
<feature type="helix" evidence="5">
    <location>
        <begin position="4"/>
        <end position="17"/>
    </location>
</feature>
<feature type="turn" evidence="5">
    <location>
        <begin position="18"/>
        <end position="20"/>
    </location>
</feature>
<feature type="helix" evidence="5">
    <location>
        <begin position="21"/>
        <end position="35"/>
    </location>
</feature>
<feature type="helix" evidence="5">
    <location>
        <begin position="37"/>
        <end position="42"/>
    </location>
</feature>
<feature type="helix" evidence="5">
    <location>
        <begin position="53"/>
        <end position="70"/>
    </location>
</feature>
<feature type="helix" evidence="5">
    <location>
        <begin position="76"/>
        <end position="79"/>
    </location>
</feature>
<feature type="helix" evidence="5">
    <location>
        <begin position="81"/>
        <end position="89"/>
    </location>
</feature>
<feature type="helix" evidence="5">
    <location>
        <begin position="96"/>
        <end position="112"/>
    </location>
</feature>
<feature type="turn" evidence="5">
    <location>
        <begin position="114"/>
        <end position="116"/>
    </location>
</feature>
<feature type="helix" evidence="5">
    <location>
        <begin position="119"/>
        <end position="137"/>
    </location>
</feature>
<feature type="helix" evidence="5">
    <location>
        <begin position="138"/>
        <end position="140"/>
    </location>
</feature>
<evidence type="ECO:0000250" key="1">
    <source>
        <dbReference type="UniProtKB" id="P01942"/>
    </source>
</evidence>
<evidence type="ECO:0000250" key="2">
    <source>
        <dbReference type="UniProtKB" id="P01946"/>
    </source>
</evidence>
<evidence type="ECO:0000250" key="3">
    <source>
        <dbReference type="UniProtKB" id="P69905"/>
    </source>
</evidence>
<evidence type="ECO:0000255" key="4">
    <source>
        <dbReference type="PROSITE-ProRule" id="PRU00238"/>
    </source>
</evidence>
<evidence type="ECO:0007829" key="5">
    <source>
        <dbReference type="PDB" id="3GDJ"/>
    </source>
</evidence>